<name>CAST2_HUMAN</name>
<feature type="chain" id="PRO_0000341304" description="Cytosolic arginine sensor for mTORC1 subunit 2">
    <location>
        <begin position="1"/>
        <end position="329"/>
    </location>
</feature>
<feature type="domain" description="ACT 1">
    <location>
        <begin position="72"/>
        <end position="140"/>
    </location>
</feature>
<feature type="domain" description="ACT 2">
    <location>
        <begin position="262"/>
        <end position="322"/>
    </location>
</feature>
<comment type="function">
    <text evidence="1">Functions as a negative regulator of the TORC1 signaling pathway through the GATOR complex. As part of homodimers or heterodimers with CASTOR1, directly binds and inhibits the GATOR subcomplex GATOR2 and thereby mTORC1. Does not directly bind arginine, but binding of arginine to CASTOR1 disrupts the interaction of CASTOR2-containing heterodimers with GATOR2 which can in turn activate mTORC1 and the TORC1 signaling pathway.</text>
</comment>
<comment type="subunit">
    <text evidence="1">Forms homodimers and heterodimers with CASTOR1 (PubMed:26972053). Interacts with the GATOR2 complex which is composed of MIOS, SEC13, SEH1L, WDR24 and WDR59; the interaction is not regulated by arginine (PubMed:26972053).</text>
</comment>
<comment type="interaction">
    <interactant intactId="EBI-11102839">
        <id>A6NHX0</id>
    </interactant>
    <interactant intactId="EBI-10276168">
        <id>Q8WTX7</id>
        <label>CASTOR1</label>
    </interactant>
    <organismsDiffer>false</organismsDiffer>
    <experiments>11</experiments>
</comment>
<comment type="interaction">
    <interactant intactId="EBI-11102839">
        <id>A6NHX0</id>
    </interactant>
    <interactant intactId="EBI-11102839">
        <id>A6NHX0</id>
        <label>CASTOR2</label>
    </interactant>
    <organismsDiffer>false</organismsDiffer>
    <experiments>2</experiments>
</comment>
<comment type="interaction">
    <interactant intactId="EBI-11102839">
        <id>A6NHX0</id>
    </interactant>
    <interactant intactId="EBI-2515122">
        <id>Q9NXC5</id>
        <label>MIOS</label>
    </interactant>
    <organismsDiffer>false</organismsDiffer>
    <experiments>2</experiments>
</comment>
<comment type="interaction">
    <interactant intactId="EBI-11102839">
        <id>A6NHX0</id>
    </interactant>
    <interactant intactId="EBI-2515073">
        <id>Q6PJI9</id>
        <label>WDR59</label>
    </interactant>
    <organismsDiffer>false</organismsDiffer>
    <experiments>6</experiments>
</comment>
<comment type="subcellular location">
    <subcellularLocation>
        <location evidence="1">Cytoplasm</location>
        <location evidence="1">Cytosol</location>
    </subcellularLocation>
</comment>
<comment type="tissue specificity">
    <text evidence="2">Widely expressed.</text>
</comment>
<comment type="similarity">
    <text evidence="3">Belongs to the GATS family.</text>
</comment>
<proteinExistence type="evidence at protein level"/>
<reference key="1">
    <citation type="journal article" date="2003" name="Nature">
        <title>The DNA sequence of human chromosome 7.</title>
        <authorList>
            <person name="Hillier L.W."/>
            <person name="Fulton R.S."/>
            <person name="Fulton L.A."/>
            <person name="Graves T.A."/>
            <person name="Pepin K.H."/>
            <person name="Wagner-McPherson C."/>
            <person name="Layman D."/>
            <person name="Maas J."/>
            <person name="Jaeger S."/>
            <person name="Walker R."/>
            <person name="Wylie K."/>
            <person name="Sekhon M."/>
            <person name="Becker M.C."/>
            <person name="O'Laughlin M.D."/>
            <person name="Schaller M.E."/>
            <person name="Fewell G.A."/>
            <person name="Delehaunty K.D."/>
            <person name="Miner T.L."/>
            <person name="Nash W.E."/>
            <person name="Cordes M."/>
            <person name="Du H."/>
            <person name="Sun H."/>
            <person name="Edwards J."/>
            <person name="Bradshaw-Cordum H."/>
            <person name="Ali J."/>
            <person name="Andrews S."/>
            <person name="Isak A."/>
            <person name="Vanbrunt A."/>
            <person name="Nguyen C."/>
            <person name="Du F."/>
            <person name="Lamar B."/>
            <person name="Courtney L."/>
            <person name="Kalicki J."/>
            <person name="Ozersky P."/>
            <person name="Bielicki L."/>
            <person name="Scott K."/>
            <person name="Holmes A."/>
            <person name="Harkins R."/>
            <person name="Harris A."/>
            <person name="Strong C.M."/>
            <person name="Hou S."/>
            <person name="Tomlinson C."/>
            <person name="Dauphin-Kohlberg S."/>
            <person name="Kozlowicz-Reilly A."/>
            <person name="Leonard S."/>
            <person name="Rohlfing T."/>
            <person name="Rock S.M."/>
            <person name="Tin-Wollam A.-M."/>
            <person name="Abbott A."/>
            <person name="Minx P."/>
            <person name="Maupin R."/>
            <person name="Strowmatt C."/>
            <person name="Latreille P."/>
            <person name="Miller N."/>
            <person name="Johnson D."/>
            <person name="Murray J."/>
            <person name="Woessner J.P."/>
            <person name="Wendl M.C."/>
            <person name="Yang S.-P."/>
            <person name="Schultz B.R."/>
            <person name="Wallis J.W."/>
            <person name="Spieth J."/>
            <person name="Bieri T.A."/>
            <person name="Nelson J.O."/>
            <person name="Berkowicz N."/>
            <person name="Wohldmann P.E."/>
            <person name="Cook L.L."/>
            <person name="Hickenbotham M.T."/>
            <person name="Eldred J."/>
            <person name="Williams D."/>
            <person name="Bedell J.A."/>
            <person name="Mardis E.R."/>
            <person name="Clifton S.W."/>
            <person name="Chissoe S.L."/>
            <person name="Marra M.A."/>
            <person name="Raymond C."/>
            <person name="Haugen E."/>
            <person name="Gillett W."/>
            <person name="Zhou Y."/>
            <person name="James R."/>
            <person name="Phelps K."/>
            <person name="Iadanoto S."/>
            <person name="Bubb K."/>
            <person name="Simms E."/>
            <person name="Levy R."/>
            <person name="Clendenning J."/>
            <person name="Kaul R."/>
            <person name="Kent W.J."/>
            <person name="Furey T.S."/>
            <person name="Baertsch R.A."/>
            <person name="Brent M.R."/>
            <person name="Keibler E."/>
            <person name="Flicek P."/>
            <person name="Bork P."/>
            <person name="Suyama M."/>
            <person name="Bailey J.A."/>
            <person name="Portnoy M.E."/>
            <person name="Torrents D."/>
            <person name="Chinwalla A.T."/>
            <person name="Gish W.R."/>
            <person name="Eddy S.R."/>
            <person name="McPherson J.D."/>
            <person name="Olson M.V."/>
            <person name="Eichler E.E."/>
            <person name="Green E.D."/>
            <person name="Waterston R.H."/>
            <person name="Wilson R.K."/>
        </authorList>
    </citation>
    <scope>NUCLEOTIDE SEQUENCE [LARGE SCALE GENOMIC DNA]</scope>
</reference>
<reference key="2">
    <citation type="journal article" date="2004" name="Genome Res.">
        <title>The status, quality, and expansion of the NIH full-length cDNA project: the Mammalian Gene Collection (MGC).</title>
        <authorList>
            <consortium name="The MGC Project Team"/>
        </authorList>
    </citation>
    <scope>NUCLEOTIDE SEQUENCE [LARGE SCALE MRNA]</scope>
</reference>
<reference key="3">
    <citation type="journal article" date="2016" name="Cell">
        <title>The CASTOR proteins are arginine sensors for the mTORC1 pathway.</title>
        <authorList>
            <person name="Chantranupong L."/>
            <person name="Scaria S.M."/>
            <person name="Saxton R.A."/>
            <person name="Gygi M.P."/>
            <person name="Shen K."/>
            <person name="Wyant G.A."/>
            <person name="Wang T."/>
            <person name="Harper J.W."/>
            <person name="Gygi S.P."/>
            <person name="Sabatini D.M."/>
        </authorList>
    </citation>
    <scope>FUNCTION</scope>
    <scope>INTERACTION WITH GATOR2 COMPLEX</scope>
    <scope>OLIGOMERIZATION</scope>
    <scope>SUBCELLULAR LOCATION</scope>
    <scope>TISSUE SPECIFICITY</scope>
</reference>
<evidence type="ECO:0000269" key="1">
    <source>
    </source>
</evidence>
<evidence type="ECO:0000303" key="2">
    <source>
    </source>
</evidence>
<evidence type="ECO:0000305" key="3"/>
<evidence type="ECO:0000305" key="4">
    <source>
    </source>
</evidence>
<evidence type="ECO:0000312" key="5">
    <source>
        <dbReference type="HGNC" id="HGNC:37073"/>
    </source>
</evidence>
<dbReference type="EMBL" id="AC245150">
    <property type="status" value="NOT_ANNOTATED_CDS"/>
    <property type="molecule type" value="Genomic_DNA"/>
</dbReference>
<dbReference type="EMBL" id="BC147030">
    <property type="protein sequence ID" value="AAI47031.1"/>
    <property type="molecule type" value="mRNA"/>
</dbReference>
<dbReference type="EMBL" id="BC147031">
    <property type="protein sequence ID" value="AAI47032.1"/>
    <property type="molecule type" value="mRNA"/>
</dbReference>
<dbReference type="EMBL" id="BC150658">
    <property type="protein sequence ID" value="AAI50659.1"/>
    <property type="molecule type" value="mRNA"/>
</dbReference>
<dbReference type="CCDS" id="CCDS75620.1"/>
<dbReference type="RefSeq" id="NP_001138536.1">
    <property type="nucleotide sequence ID" value="NM_001145064.3"/>
</dbReference>
<dbReference type="SMR" id="A6NHX0"/>
<dbReference type="BioGRID" id="609839">
    <property type="interactions" value="21"/>
</dbReference>
<dbReference type="ComplexPortal" id="CPX-2667">
    <property type="entry name" value="CASTOR1-CASTOR2 arginine binding complex"/>
</dbReference>
<dbReference type="DIP" id="DIP-62097N"/>
<dbReference type="FunCoup" id="A6NHX0">
    <property type="interactions" value="525"/>
</dbReference>
<dbReference type="IntAct" id="A6NHX0">
    <property type="interactions" value="7"/>
</dbReference>
<dbReference type="STRING" id="9606.ENSP00000484732"/>
<dbReference type="iPTMnet" id="A6NHX0"/>
<dbReference type="PhosphoSitePlus" id="A6NHX0"/>
<dbReference type="SwissPalm" id="A6NHX0"/>
<dbReference type="BioMuta" id="CASTOR2"/>
<dbReference type="jPOST" id="A6NHX0"/>
<dbReference type="MassIVE" id="A6NHX0"/>
<dbReference type="PaxDb" id="9606-ENSP00000484732"/>
<dbReference type="PeptideAtlas" id="A6NHX0"/>
<dbReference type="ProteomicsDB" id="1231"/>
<dbReference type="Pumba" id="A6NHX0"/>
<dbReference type="Antibodypedia" id="74738">
    <property type="antibodies" value="35 antibodies from 8 providers"/>
</dbReference>
<dbReference type="DNASU" id="729438"/>
<dbReference type="Ensembl" id="ENST00000616305.2">
    <property type="protein sequence ID" value="ENSP00000484732.1"/>
    <property type="gene ID" value="ENSG00000274070.2"/>
</dbReference>
<dbReference type="GeneID" id="729438"/>
<dbReference type="KEGG" id="hsa:729438"/>
<dbReference type="MANE-Select" id="ENST00000616305.2">
    <property type="protein sequence ID" value="ENSP00000484732.1"/>
    <property type="RefSeq nucleotide sequence ID" value="NM_001145064.3"/>
    <property type="RefSeq protein sequence ID" value="NP_001138536.1"/>
</dbReference>
<dbReference type="UCSC" id="uc003ucg.4">
    <property type="organism name" value="human"/>
</dbReference>
<dbReference type="AGR" id="HGNC:37073"/>
<dbReference type="CTD" id="729438"/>
<dbReference type="DisGeNET" id="729438"/>
<dbReference type="GeneCards" id="CASTOR2"/>
<dbReference type="HGNC" id="HGNC:37073">
    <property type="gene designation" value="CASTOR2"/>
</dbReference>
<dbReference type="HPA" id="ENSG00000274070">
    <property type="expression patterns" value="Group enriched (skeletal muscle, tongue)"/>
</dbReference>
<dbReference type="MIM" id="617033">
    <property type="type" value="gene"/>
</dbReference>
<dbReference type="neXtProt" id="NX_A6NHX0"/>
<dbReference type="OpenTargets" id="ENSG00000274070"/>
<dbReference type="PharmGKB" id="PA164720237"/>
<dbReference type="VEuPathDB" id="HostDB:ENSG00000274070"/>
<dbReference type="eggNOG" id="ENOG502QV83">
    <property type="taxonomic scope" value="Eukaryota"/>
</dbReference>
<dbReference type="GeneTree" id="ENSGT00390000006208"/>
<dbReference type="HOGENOM" id="CLU_057799_0_0_1"/>
<dbReference type="InParanoid" id="A6NHX0"/>
<dbReference type="OMA" id="NEECGHI"/>
<dbReference type="OrthoDB" id="58529at2759"/>
<dbReference type="PAN-GO" id="A6NHX0">
    <property type="GO annotations" value="3 GO annotations based on evolutionary models"/>
</dbReference>
<dbReference type="PhylomeDB" id="A6NHX0"/>
<dbReference type="TreeFam" id="TF331648"/>
<dbReference type="PathwayCommons" id="A6NHX0"/>
<dbReference type="Reactome" id="R-HSA-9639288">
    <property type="pathway name" value="Amino acids regulate mTORC1"/>
</dbReference>
<dbReference type="BioGRID-ORCS" id="729438">
    <property type="hits" value="18 hits in 1043 CRISPR screens"/>
</dbReference>
<dbReference type="ChiTaRS" id="GATSL2">
    <property type="organism name" value="human"/>
</dbReference>
<dbReference type="GenomeRNAi" id="729438"/>
<dbReference type="Pharos" id="A6NHX0">
    <property type="development level" value="Tbio"/>
</dbReference>
<dbReference type="PRO" id="PR:A6NHX0"/>
<dbReference type="Proteomes" id="UP000005640">
    <property type="component" value="Chromosome 7"/>
</dbReference>
<dbReference type="RNAct" id="A6NHX0">
    <property type="molecule type" value="protein"/>
</dbReference>
<dbReference type="Bgee" id="ENSG00000274070">
    <property type="expression patterns" value="Expressed in tibialis anterior and 191 other cell types or tissues"/>
</dbReference>
<dbReference type="GO" id="GO:0005829">
    <property type="term" value="C:cytosol"/>
    <property type="evidence" value="ECO:0000314"/>
    <property type="project" value="UniProtKB"/>
</dbReference>
<dbReference type="GO" id="GO:0042802">
    <property type="term" value="F:identical protein binding"/>
    <property type="evidence" value="ECO:0000314"/>
    <property type="project" value="UniProtKB"/>
</dbReference>
<dbReference type="GO" id="GO:1903577">
    <property type="term" value="P:cellular response to L-arginine"/>
    <property type="evidence" value="ECO:0000318"/>
    <property type="project" value="GO_Central"/>
</dbReference>
<dbReference type="GO" id="GO:1904262">
    <property type="term" value="P:negative regulation of TORC1 signaling"/>
    <property type="evidence" value="ECO:0000315"/>
    <property type="project" value="UniProtKB"/>
</dbReference>
<dbReference type="FunFam" id="3.30.2130.10:FF:000003">
    <property type="entry name" value="Cytosolic arginine sensor for mTORC1 subunit 1"/>
    <property type="match status" value="1"/>
</dbReference>
<dbReference type="FunFam" id="3.30.2130.10:FF:000004">
    <property type="entry name" value="Cytosolic arginine sensor for mTORC1 subunit 1"/>
    <property type="match status" value="1"/>
</dbReference>
<dbReference type="Gene3D" id="3.30.2130.10">
    <property type="entry name" value="VC0802-like"/>
    <property type="match status" value="2"/>
</dbReference>
<dbReference type="InterPro" id="IPR045865">
    <property type="entry name" value="ACT-like_dom_sf"/>
</dbReference>
<dbReference type="InterPro" id="IPR049479">
    <property type="entry name" value="CASTOR1_ACT-like"/>
</dbReference>
<dbReference type="InterPro" id="IPR040778">
    <property type="entry name" value="CASTOR1_N"/>
</dbReference>
<dbReference type="InterPro" id="IPR027795">
    <property type="entry name" value="CASTOR_ACT_dom"/>
</dbReference>
<dbReference type="InterPro" id="IPR026249">
    <property type="entry name" value="CASTOR_fam"/>
</dbReference>
<dbReference type="InterPro" id="IPR051719">
    <property type="entry name" value="CASTOR_mTORC1"/>
</dbReference>
<dbReference type="PANTHER" id="PTHR31131">
    <property type="entry name" value="CHROMOSOME 1, WHOLE GENOME SHOTGUN SEQUENCE"/>
    <property type="match status" value="1"/>
</dbReference>
<dbReference type="PANTHER" id="PTHR31131:SF2">
    <property type="entry name" value="CYTOSOLIC ARGININE SENSOR FOR MTORC1 SUBUNIT 2"/>
    <property type="match status" value="1"/>
</dbReference>
<dbReference type="Pfam" id="PF13840">
    <property type="entry name" value="ACT_7"/>
    <property type="match status" value="2"/>
</dbReference>
<dbReference type="Pfam" id="PF21389">
    <property type="entry name" value="CASTOR1_ACT-like"/>
    <property type="match status" value="1"/>
</dbReference>
<dbReference type="Pfam" id="PF18700">
    <property type="entry name" value="Castor1_N"/>
    <property type="match status" value="1"/>
</dbReference>
<dbReference type="PRINTS" id="PR02078">
    <property type="entry name" value="GATSLIKEFMLY"/>
</dbReference>
<dbReference type="SUPFAM" id="SSF55021">
    <property type="entry name" value="ACT-like"/>
    <property type="match status" value="2"/>
</dbReference>
<gene>
    <name evidence="2 5" type="primary">CASTOR2</name>
    <name evidence="5" type="synonym">GATSL1</name>
    <name evidence="5" type="synonym">GATSL2</name>
</gene>
<protein>
    <recommendedName>
        <fullName evidence="5">Cytosolic arginine sensor for mTORC1 subunit 2</fullName>
    </recommendedName>
    <alternativeName>
        <fullName evidence="4">Cellular arginine sensor for mTORC1 protein 2</fullName>
    </alternativeName>
    <alternativeName>
        <fullName evidence="3">GATS-like protein 2</fullName>
    </alternativeName>
</protein>
<organism>
    <name type="scientific">Homo sapiens</name>
    <name type="common">Human</name>
    <dbReference type="NCBI Taxonomy" id="9606"/>
    <lineage>
        <taxon>Eukaryota</taxon>
        <taxon>Metazoa</taxon>
        <taxon>Chordata</taxon>
        <taxon>Craniata</taxon>
        <taxon>Vertebrata</taxon>
        <taxon>Euteleostomi</taxon>
        <taxon>Mammalia</taxon>
        <taxon>Eutheria</taxon>
        <taxon>Euarchontoglires</taxon>
        <taxon>Primates</taxon>
        <taxon>Haplorrhini</taxon>
        <taxon>Catarrhini</taxon>
        <taxon>Hominidae</taxon>
        <taxon>Homo</taxon>
    </lineage>
</organism>
<sequence>MELHILEHRLQVASVAKESIPLFTYGLIKLAFLSSKTRCKFFSLTETPEDYTIIVDEEGFLELPSSEHLSVADATWLALNVVSGGGSFSSSQPIGVTKIAKSVIAPLADQNISVFMLSTYQTDFILVRERDLPFVTHTLSSEFTILRVVNGETVAAENLGITNGFVKPKLVQRPVIHPLSSPSNRFCVTSLDPDTLPAVATLLMDVMFYSNGVKDPMATGDDCGHIRFFSFSLIEGYISLVMDVQTQQRFPSNLLFTSASGELWKMVRIGGQPLGFDECGIVAQISEPLAAADIPAYYISTFKFDHALVPEENINGVISALKVSQAEKH</sequence>
<accession>A6NHX0</accession>
<accession>A6NNH0</accession>
<accession>B9EJH9</accession>
<keyword id="KW-0963">Cytoplasm</keyword>
<keyword id="KW-1267">Proteomics identification</keyword>
<keyword id="KW-1185">Reference proteome</keyword>